<reference key="1">
    <citation type="journal article" date="2005" name="Science">
        <title>The transcriptional landscape of the mammalian genome.</title>
        <authorList>
            <person name="Carninci P."/>
            <person name="Kasukawa T."/>
            <person name="Katayama S."/>
            <person name="Gough J."/>
            <person name="Frith M.C."/>
            <person name="Maeda N."/>
            <person name="Oyama R."/>
            <person name="Ravasi T."/>
            <person name="Lenhard B."/>
            <person name="Wells C."/>
            <person name="Kodzius R."/>
            <person name="Shimokawa K."/>
            <person name="Bajic V.B."/>
            <person name="Brenner S.E."/>
            <person name="Batalov S."/>
            <person name="Forrest A.R."/>
            <person name="Zavolan M."/>
            <person name="Davis M.J."/>
            <person name="Wilming L.G."/>
            <person name="Aidinis V."/>
            <person name="Allen J.E."/>
            <person name="Ambesi-Impiombato A."/>
            <person name="Apweiler R."/>
            <person name="Aturaliya R.N."/>
            <person name="Bailey T.L."/>
            <person name="Bansal M."/>
            <person name="Baxter L."/>
            <person name="Beisel K.W."/>
            <person name="Bersano T."/>
            <person name="Bono H."/>
            <person name="Chalk A.M."/>
            <person name="Chiu K.P."/>
            <person name="Choudhary V."/>
            <person name="Christoffels A."/>
            <person name="Clutterbuck D.R."/>
            <person name="Crowe M.L."/>
            <person name="Dalla E."/>
            <person name="Dalrymple B.P."/>
            <person name="de Bono B."/>
            <person name="Della Gatta G."/>
            <person name="di Bernardo D."/>
            <person name="Down T."/>
            <person name="Engstrom P."/>
            <person name="Fagiolini M."/>
            <person name="Faulkner G."/>
            <person name="Fletcher C.F."/>
            <person name="Fukushima T."/>
            <person name="Furuno M."/>
            <person name="Futaki S."/>
            <person name="Gariboldi M."/>
            <person name="Georgii-Hemming P."/>
            <person name="Gingeras T.R."/>
            <person name="Gojobori T."/>
            <person name="Green R.E."/>
            <person name="Gustincich S."/>
            <person name="Harbers M."/>
            <person name="Hayashi Y."/>
            <person name="Hensch T.K."/>
            <person name="Hirokawa N."/>
            <person name="Hill D."/>
            <person name="Huminiecki L."/>
            <person name="Iacono M."/>
            <person name="Ikeo K."/>
            <person name="Iwama A."/>
            <person name="Ishikawa T."/>
            <person name="Jakt M."/>
            <person name="Kanapin A."/>
            <person name="Katoh M."/>
            <person name="Kawasawa Y."/>
            <person name="Kelso J."/>
            <person name="Kitamura H."/>
            <person name="Kitano H."/>
            <person name="Kollias G."/>
            <person name="Krishnan S.P."/>
            <person name="Kruger A."/>
            <person name="Kummerfeld S.K."/>
            <person name="Kurochkin I.V."/>
            <person name="Lareau L.F."/>
            <person name="Lazarevic D."/>
            <person name="Lipovich L."/>
            <person name="Liu J."/>
            <person name="Liuni S."/>
            <person name="McWilliam S."/>
            <person name="Madan Babu M."/>
            <person name="Madera M."/>
            <person name="Marchionni L."/>
            <person name="Matsuda H."/>
            <person name="Matsuzawa S."/>
            <person name="Miki H."/>
            <person name="Mignone F."/>
            <person name="Miyake S."/>
            <person name="Morris K."/>
            <person name="Mottagui-Tabar S."/>
            <person name="Mulder N."/>
            <person name="Nakano N."/>
            <person name="Nakauchi H."/>
            <person name="Ng P."/>
            <person name="Nilsson R."/>
            <person name="Nishiguchi S."/>
            <person name="Nishikawa S."/>
            <person name="Nori F."/>
            <person name="Ohara O."/>
            <person name="Okazaki Y."/>
            <person name="Orlando V."/>
            <person name="Pang K.C."/>
            <person name="Pavan W.J."/>
            <person name="Pavesi G."/>
            <person name="Pesole G."/>
            <person name="Petrovsky N."/>
            <person name="Piazza S."/>
            <person name="Reed J."/>
            <person name="Reid J.F."/>
            <person name="Ring B.Z."/>
            <person name="Ringwald M."/>
            <person name="Rost B."/>
            <person name="Ruan Y."/>
            <person name="Salzberg S.L."/>
            <person name="Sandelin A."/>
            <person name="Schneider C."/>
            <person name="Schoenbach C."/>
            <person name="Sekiguchi K."/>
            <person name="Semple C.A."/>
            <person name="Seno S."/>
            <person name="Sessa L."/>
            <person name="Sheng Y."/>
            <person name="Shibata Y."/>
            <person name="Shimada H."/>
            <person name="Shimada K."/>
            <person name="Silva D."/>
            <person name="Sinclair B."/>
            <person name="Sperling S."/>
            <person name="Stupka E."/>
            <person name="Sugiura K."/>
            <person name="Sultana R."/>
            <person name="Takenaka Y."/>
            <person name="Taki K."/>
            <person name="Tammoja K."/>
            <person name="Tan S.L."/>
            <person name="Tang S."/>
            <person name="Taylor M.S."/>
            <person name="Tegner J."/>
            <person name="Teichmann S.A."/>
            <person name="Ueda H.R."/>
            <person name="van Nimwegen E."/>
            <person name="Verardo R."/>
            <person name="Wei C.L."/>
            <person name="Yagi K."/>
            <person name="Yamanishi H."/>
            <person name="Zabarovsky E."/>
            <person name="Zhu S."/>
            <person name="Zimmer A."/>
            <person name="Hide W."/>
            <person name="Bult C."/>
            <person name="Grimmond S.M."/>
            <person name="Teasdale R.D."/>
            <person name="Liu E.T."/>
            <person name="Brusic V."/>
            <person name="Quackenbush J."/>
            <person name="Wahlestedt C."/>
            <person name="Mattick J.S."/>
            <person name="Hume D.A."/>
            <person name="Kai C."/>
            <person name="Sasaki D."/>
            <person name="Tomaru Y."/>
            <person name="Fukuda S."/>
            <person name="Kanamori-Katayama M."/>
            <person name="Suzuki M."/>
            <person name="Aoki J."/>
            <person name="Arakawa T."/>
            <person name="Iida J."/>
            <person name="Imamura K."/>
            <person name="Itoh M."/>
            <person name="Kato T."/>
            <person name="Kawaji H."/>
            <person name="Kawagashira N."/>
            <person name="Kawashima T."/>
            <person name="Kojima M."/>
            <person name="Kondo S."/>
            <person name="Konno H."/>
            <person name="Nakano K."/>
            <person name="Ninomiya N."/>
            <person name="Nishio T."/>
            <person name="Okada M."/>
            <person name="Plessy C."/>
            <person name="Shibata K."/>
            <person name="Shiraki T."/>
            <person name="Suzuki S."/>
            <person name="Tagami M."/>
            <person name="Waki K."/>
            <person name="Watahiki A."/>
            <person name="Okamura-Oho Y."/>
            <person name="Suzuki H."/>
            <person name="Kawai J."/>
            <person name="Hayashizaki Y."/>
        </authorList>
    </citation>
    <scope>NUCLEOTIDE SEQUENCE [LARGE SCALE MRNA]</scope>
    <source>
        <strain>C57BL/6J</strain>
        <tissue>Brain</tissue>
    </source>
</reference>
<reference key="2">
    <citation type="journal article" date="2010" name="Cell">
        <title>A tissue-specific atlas of mouse protein phosphorylation and expression.</title>
        <authorList>
            <person name="Huttlin E.L."/>
            <person name="Jedrychowski M.P."/>
            <person name="Elias J.E."/>
            <person name="Goswami T."/>
            <person name="Rad R."/>
            <person name="Beausoleil S.A."/>
            <person name="Villen J."/>
            <person name="Haas W."/>
            <person name="Sowa M.E."/>
            <person name="Gygi S.P."/>
        </authorList>
    </citation>
    <scope>IDENTIFICATION BY MASS SPECTROMETRY [LARGE SCALE ANALYSIS]</scope>
    <source>
        <tissue>Brain</tissue>
        <tissue>Brown adipose tissue</tissue>
        <tissue>Heart</tissue>
        <tissue>Kidney</tissue>
        <tissue>Liver</tissue>
        <tissue>Pancreas</tissue>
        <tissue>Spleen</tissue>
        <tissue>Testis</tissue>
    </source>
</reference>
<organism>
    <name type="scientific">Mus musculus</name>
    <name type="common">Mouse</name>
    <dbReference type="NCBI Taxonomy" id="10090"/>
    <lineage>
        <taxon>Eukaryota</taxon>
        <taxon>Metazoa</taxon>
        <taxon>Chordata</taxon>
        <taxon>Craniata</taxon>
        <taxon>Vertebrata</taxon>
        <taxon>Euteleostomi</taxon>
        <taxon>Mammalia</taxon>
        <taxon>Eutheria</taxon>
        <taxon>Euarchontoglires</taxon>
        <taxon>Glires</taxon>
        <taxon>Rodentia</taxon>
        <taxon>Myomorpha</taxon>
        <taxon>Muroidea</taxon>
        <taxon>Muridae</taxon>
        <taxon>Murinae</taxon>
        <taxon>Mus</taxon>
        <taxon>Mus</taxon>
    </lineage>
</organism>
<keyword id="KW-0408">Iron</keyword>
<keyword id="KW-0411">Iron-sulfur</keyword>
<keyword id="KW-0479">Metal-binding</keyword>
<keyword id="KW-0496">Mitochondrion</keyword>
<keyword id="KW-1185">Reference proteome</keyword>
<keyword id="KW-0809">Transit peptide</keyword>
<dbReference type="EMBL" id="AK002936">
    <property type="protein sequence ID" value="BAB22467.1"/>
    <property type="status" value="ALT_INIT"/>
    <property type="molecule type" value="mRNA"/>
</dbReference>
<dbReference type="CCDS" id="CCDS49111.1"/>
<dbReference type="RefSeq" id="NP_083139.1">
    <property type="nucleotide sequence ID" value="NM_028863.1"/>
</dbReference>
<dbReference type="SMR" id="Q9DCB8"/>
<dbReference type="BioGRID" id="216661">
    <property type="interactions" value="1"/>
</dbReference>
<dbReference type="FunCoup" id="Q9DCB8">
    <property type="interactions" value="1744"/>
</dbReference>
<dbReference type="IntAct" id="Q9DCB8">
    <property type="interactions" value="1"/>
</dbReference>
<dbReference type="STRING" id="10090.ENSMUSP00000021667"/>
<dbReference type="iPTMnet" id="Q9DCB8"/>
<dbReference type="PhosphoSitePlus" id="Q9DCB8"/>
<dbReference type="SwissPalm" id="Q9DCB8"/>
<dbReference type="jPOST" id="Q9DCB8"/>
<dbReference type="PaxDb" id="10090-ENSMUSP00000021667"/>
<dbReference type="PeptideAtlas" id="Q9DCB8"/>
<dbReference type="ProteomicsDB" id="267009"/>
<dbReference type="Pumba" id="Q9DCB8"/>
<dbReference type="Antibodypedia" id="25630">
    <property type="antibodies" value="156 antibodies from 23 providers"/>
</dbReference>
<dbReference type="Ensembl" id="ENSMUST00000021667.7">
    <property type="protein sequence ID" value="ENSMUSP00000021667.6"/>
    <property type="gene ID" value="ENSMUSG00000021241.8"/>
</dbReference>
<dbReference type="GeneID" id="74316"/>
<dbReference type="KEGG" id="mmu:74316"/>
<dbReference type="UCSC" id="uc007ofu.2">
    <property type="organism name" value="mouse"/>
</dbReference>
<dbReference type="AGR" id="MGI:1921566"/>
<dbReference type="CTD" id="122961"/>
<dbReference type="MGI" id="MGI:1921566">
    <property type="gene designation" value="Isca2"/>
</dbReference>
<dbReference type="VEuPathDB" id="HostDB:ENSMUSG00000021241"/>
<dbReference type="eggNOG" id="KOG1119">
    <property type="taxonomic scope" value="Eukaryota"/>
</dbReference>
<dbReference type="GeneTree" id="ENSGT00390000005700"/>
<dbReference type="HOGENOM" id="CLU_069054_1_4_1"/>
<dbReference type="InParanoid" id="Q9DCB8"/>
<dbReference type="OMA" id="SFQIHNP"/>
<dbReference type="OrthoDB" id="1938621at2759"/>
<dbReference type="PhylomeDB" id="Q9DCB8"/>
<dbReference type="TreeFam" id="TF314519"/>
<dbReference type="Reactome" id="R-MMU-1362409">
    <property type="pathway name" value="Mitochondrial iron-sulfur cluster biogenesis"/>
</dbReference>
<dbReference type="Reactome" id="R-MMU-9854311">
    <property type="pathway name" value="Maturation of TCA enzymes and regulation of TCA cycle"/>
</dbReference>
<dbReference type="BioGRID-ORCS" id="74316">
    <property type="hits" value="26 hits in 80 CRISPR screens"/>
</dbReference>
<dbReference type="ChiTaRS" id="Isca2">
    <property type="organism name" value="mouse"/>
</dbReference>
<dbReference type="PRO" id="PR:Q9DCB8"/>
<dbReference type="Proteomes" id="UP000000589">
    <property type="component" value="Chromosome 12"/>
</dbReference>
<dbReference type="RNAct" id="Q9DCB8">
    <property type="molecule type" value="protein"/>
</dbReference>
<dbReference type="Bgee" id="ENSMUSG00000021241">
    <property type="expression patterns" value="Expressed in brown adipose tissue and 258 other cell types or tissues"/>
</dbReference>
<dbReference type="ExpressionAtlas" id="Q9DCB8">
    <property type="expression patterns" value="baseline and differential"/>
</dbReference>
<dbReference type="GO" id="GO:0120510">
    <property type="term" value="C:mitochondrial [4Fe-4S] assembly complex"/>
    <property type="evidence" value="ECO:0007669"/>
    <property type="project" value="Ensembl"/>
</dbReference>
<dbReference type="GO" id="GO:0005739">
    <property type="term" value="C:mitochondrion"/>
    <property type="evidence" value="ECO:0007005"/>
    <property type="project" value="MGI"/>
</dbReference>
<dbReference type="GO" id="GO:0042802">
    <property type="term" value="F:identical protein binding"/>
    <property type="evidence" value="ECO:0007669"/>
    <property type="project" value="Ensembl"/>
</dbReference>
<dbReference type="GO" id="GO:0051536">
    <property type="term" value="F:iron-sulfur cluster binding"/>
    <property type="evidence" value="ECO:0007669"/>
    <property type="project" value="UniProtKB-KW"/>
</dbReference>
<dbReference type="GO" id="GO:0046872">
    <property type="term" value="F:metal ion binding"/>
    <property type="evidence" value="ECO:0007669"/>
    <property type="project" value="UniProtKB-KW"/>
</dbReference>
<dbReference type="GO" id="GO:0016226">
    <property type="term" value="P:iron-sulfur cluster assembly"/>
    <property type="evidence" value="ECO:0007669"/>
    <property type="project" value="InterPro"/>
</dbReference>
<dbReference type="FunFam" id="2.60.300.12:FF:000006">
    <property type="entry name" value="Iron-sulfur cluster assembly 2 mitochondrial"/>
    <property type="match status" value="1"/>
</dbReference>
<dbReference type="Gene3D" id="2.60.300.12">
    <property type="entry name" value="HesB-like domain"/>
    <property type="match status" value="1"/>
</dbReference>
<dbReference type="InterPro" id="IPR000361">
    <property type="entry name" value="FeS_biogenesis"/>
</dbReference>
<dbReference type="InterPro" id="IPR016092">
    <property type="entry name" value="FeS_cluster_insertion"/>
</dbReference>
<dbReference type="InterPro" id="IPR017870">
    <property type="entry name" value="FeS_cluster_insertion_CS"/>
</dbReference>
<dbReference type="InterPro" id="IPR035903">
    <property type="entry name" value="HesB-like_dom_sf"/>
</dbReference>
<dbReference type="NCBIfam" id="TIGR00049">
    <property type="entry name" value="iron-sulfur cluster assembly accessory protein"/>
    <property type="match status" value="1"/>
</dbReference>
<dbReference type="PANTHER" id="PTHR43011">
    <property type="entry name" value="IRON-SULFUR CLUSTER ASSEMBLY 2 HOMOLOG, MITOCHONDRIAL"/>
    <property type="match status" value="1"/>
</dbReference>
<dbReference type="PANTHER" id="PTHR43011:SF1">
    <property type="entry name" value="IRON-SULFUR CLUSTER ASSEMBLY 2 HOMOLOG, MITOCHONDRIAL"/>
    <property type="match status" value="1"/>
</dbReference>
<dbReference type="Pfam" id="PF01521">
    <property type="entry name" value="Fe-S_biosyn"/>
    <property type="match status" value="1"/>
</dbReference>
<dbReference type="SUPFAM" id="SSF89360">
    <property type="entry name" value="HesB-like domain"/>
    <property type="match status" value="1"/>
</dbReference>
<dbReference type="PROSITE" id="PS01152">
    <property type="entry name" value="HESB"/>
    <property type="match status" value="1"/>
</dbReference>
<accession>Q9DCB8</accession>
<name>ISCA2_MOUSE</name>
<comment type="function">
    <text evidence="2">Involved in the maturation of mitochondrial 4Fe-4S proteins functioning late in the iron-sulfur cluster assembly pathway. May be involved in the binding of an intermediate of Fe/S cluster assembly.</text>
</comment>
<comment type="subunit">
    <text evidence="2">Heterotetramer; forms a dimer of dimers with IBA57. Interacts with [2Fe-2S]-ISCA2 forming the heterodimer [2Fe- 2S]-ISCA2-IBA57 complex; [2Fe-2S] cluster binding is absolutely required to promote the complex formation.</text>
</comment>
<comment type="subcellular location">
    <subcellularLocation>
        <location evidence="2">Mitochondrion</location>
    </subcellularLocation>
</comment>
<comment type="similarity">
    <text evidence="4">Belongs to the HesB/IscA family.</text>
</comment>
<comment type="sequence caution" evidence="4">
    <conflict type="erroneous initiation">
        <sequence resource="EMBL-CDS" id="BAB22467"/>
    </conflict>
</comment>
<evidence type="ECO:0000250" key="1">
    <source>
        <dbReference type="UniProtKB" id="P0AAC8"/>
    </source>
</evidence>
<evidence type="ECO:0000250" key="2">
    <source>
        <dbReference type="UniProtKB" id="Q86U28"/>
    </source>
</evidence>
<evidence type="ECO:0000255" key="3"/>
<evidence type="ECO:0000305" key="4"/>
<sequence>MAASRALSLTAEAVRAVIPRRSGRLLAVFPRLLTRWETTSSIPEAGEGQIRLTDSCVQRLLEITEGSEFLRLQVEGGGCSGFQYKFSLDTVINPDDRVFEQGGARVVVDSDSLAFVKGAQVDFSQELIRSSFQVLNNPQAQQGCSCGSSFSVKV</sequence>
<proteinExistence type="evidence at protein level"/>
<feature type="transit peptide" description="Mitochondrion" evidence="3">
    <location>
        <begin position="1"/>
        <end position="8"/>
    </location>
</feature>
<feature type="chain" id="PRO_0000277589" description="Iron-sulfur cluster assembly 2 homolog, mitochondrial">
    <location>
        <begin position="9"/>
        <end position="154"/>
    </location>
</feature>
<feature type="binding site" evidence="1">
    <location>
        <position position="79"/>
    </location>
    <ligand>
        <name>Fe cation</name>
        <dbReference type="ChEBI" id="CHEBI:24875"/>
    </ligand>
</feature>
<feature type="binding site" evidence="1">
    <location>
        <position position="144"/>
    </location>
    <ligand>
        <name>Fe cation</name>
        <dbReference type="ChEBI" id="CHEBI:24875"/>
    </ligand>
</feature>
<feature type="binding site" evidence="1">
    <location>
        <position position="146"/>
    </location>
    <ligand>
        <name>Fe cation</name>
        <dbReference type="ChEBI" id="CHEBI:24875"/>
    </ligand>
</feature>
<protein>
    <recommendedName>
        <fullName>Iron-sulfur cluster assembly 2 homolog, mitochondrial</fullName>
    </recommendedName>
    <alternativeName>
        <fullName>HESB-like domain-containing protein 1</fullName>
    </alternativeName>
</protein>
<gene>
    <name type="primary">Isca2</name>
    <name type="synonym">Hbld1</name>
</gene>